<gene>
    <name type="primary">TMED2</name>
    <name type="synonym">RNP24</name>
</gene>
<evidence type="ECO:0000250" key="1">
    <source>
        <dbReference type="UniProtKB" id="Q63524"/>
    </source>
</evidence>
<evidence type="ECO:0000255" key="2"/>
<evidence type="ECO:0000255" key="3">
    <source>
        <dbReference type="PROSITE-ProRule" id="PRU00096"/>
    </source>
</evidence>
<evidence type="ECO:0000269" key="4">
    <source>
    </source>
</evidence>
<evidence type="ECO:0000269" key="5">
    <source>
    </source>
</evidence>
<evidence type="ECO:0000269" key="6">
    <source>
    </source>
</evidence>
<evidence type="ECO:0000269" key="7">
    <source>
    </source>
</evidence>
<evidence type="ECO:0000269" key="8">
    <source>
    </source>
</evidence>
<evidence type="ECO:0000269" key="9">
    <source>
    </source>
</evidence>
<evidence type="ECO:0000269" key="10">
    <source>
    </source>
</evidence>
<evidence type="ECO:0000269" key="11">
    <source>
    </source>
</evidence>
<evidence type="ECO:0000269" key="12">
    <source>
    </source>
</evidence>
<evidence type="ECO:0000269" key="13">
    <source>
    </source>
</evidence>
<evidence type="ECO:0000269" key="14">
    <source>
    </source>
</evidence>
<evidence type="ECO:0000269" key="15">
    <source>
    </source>
</evidence>
<evidence type="ECO:0000269" key="16">
    <source>
    </source>
</evidence>
<evidence type="ECO:0000305" key="17"/>
<evidence type="ECO:0007829" key="18">
    <source>
        <dbReference type="PDB" id="5AZW"/>
    </source>
</evidence>
<dbReference type="EMBL" id="X92098">
    <property type="protein sequence ID" value="CAA63069.1"/>
    <property type="molecule type" value="mRNA"/>
</dbReference>
<dbReference type="EMBL" id="BC025957">
    <property type="protein sequence ID" value="AAH25957.1"/>
    <property type="molecule type" value="mRNA"/>
</dbReference>
<dbReference type="CCDS" id="CCDS9250.1"/>
<dbReference type="RefSeq" id="NP_001308374.1">
    <property type="nucleotide sequence ID" value="NM_001321445.1"/>
</dbReference>
<dbReference type="RefSeq" id="NP_006806.1">
    <property type="nucleotide sequence ID" value="NM_006815.4"/>
</dbReference>
<dbReference type="PDB" id="5AZW">
    <property type="method" value="X-ray"/>
    <property type="resolution" value="1.50 A"/>
    <property type="chains" value="A/B=19-114"/>
</dbReference>
<dbReference type="PDBsum" id="5AZW"/>
<dbReference type="SMR" id="Q15363"/>
<dbReference type="BioGRID" id="116158">
    <property type="interactions" value="153"/>
</dbReference>
<dbReference type="CORUM" id="Q15363"/>
<dbReference type="ELM" id="Q15363"/>
<dbReference type="FunCoup" id="Q15363">
    <property type="interactions" value="3597"/>
</dbReference>
<dbReference type="IntAct" id="Q15363">
    <property type="interactions" value="111"/>
</dbReference>
<dbReference type="MINT" id="Q15363"/>
<dbReference type="STRING" id="9606.ENSP00000262225"/>
<dbReference type="TCDB" id="9.B.188.1.2">
    <property type="family name" value="the transmembrane emp24 domain-containing protein (tmed) family"/>
</dbReference>
<dbReference type="GlyGen" id="Q15363">
    <property type="glycosylation" value="3 sites, 2 O-linked glycans (3 sites)"/>
</dbReference>
<dbReference type="iPTMnet" id="Q15363"/>
<dbReference type="MetOSite" id="Q15363"/>
<dbReference type="PhosphoSitePlus" id="Q15363"/>
<dbReference type="SwissPalm" id="Q15363"/>
<dbReference type="BioMuta" id="TMED2"/>
<dbReference type="DMDM" id="3914237"/>
<dbReference type="jPOST" id="Q15363"/>
<dbReference type="MassIVE" id="Q15363"/>
<dbReference type="PaxDb" id="9606-ENSP00000262225"/>
<dbReference type="PeptideAtlas" id="Q15363"/>
<dbReference type="ProteomicsDB" id="60540"/>
<dbReference type="Pumba" id="Q15363"/>
<dbReference type="TopDownProteomics" id="Q15363"/>
<dbReference type="Antibodypedia" id="2983">
    <property type="antibodies" value="150 antibodies from 25 providers"/>
</dbReference>
<dbReference type="DNASU" id="10959"/>
<dbReference type="Ensembl" id="ENST00000262225.8">
    <property type="protein sequence ID" value="ENSP00000262225.3"/>
    <property type="gene ID" value="ENSG00000086598.11"/>
</dbReference>
<dbReference type="GeneID" id="10959"/>
<dbReference type="KEGG" id="hsa:10959"/>
<dbReference type="MANE-Select" id="ENST00000262225.8">
    <property type="protein sequence ID" value="ENSP00000262225.3"/>
    <property type="RefSeq nucleotide sequence ID" value="NM_006815.4"/>
    <property type="RefSeq protein sequence ID" value="NP_006806.1"/>
</dbReference>
<dbReference type="AGR" id="HGNC:16996"/>
<dbReference type="CTD" id="10959"/>
<dbReference type="DisGeNET" id="10959"/>
<dbReference type="GeneCards" id="TMED2"/>
<dbReference type="HGNC" id="HGNC:16996">
    <property type="gene designation" value="TMED2"/>
</dbReference>
<dbReference type="HPA" id="ENSG00000086598">
    <property type="expression patterns" value="Low tissue specificity"/>
</dbReference>
<dbReference type="MIM" id="619642">
    <property type="type" value="gene"/>
</dbReference>
<dbReference type="neXtProt" id="NX_Q15363"/>
<dbReference type="OpenTargets" id="ENSG00000086598"/>
<dbReference type="PharmGKB" id="PA142670796"/>
<dbReference type="VEuPathDB" id="HostDB:ENSG00000086598"/>
<dbReference type="eggNOG" id="KOG1692">
    <property type="taxonomic scope" value="Eukaryota"/>
</dbReference>
<dbReference type="GeneTree" id="ENSGT00940000155143"/>
<dbReference type="InParanoid" id="Q15363"/>
<dbReference type="OMA" id="MQVRDRN"/>
<dbReference type="OrthoDB" id="1929172at2759"/>
<dbReference type="PAN-GO" id="Q15363">
    <property type="GO annotations" value="7 GO annotations based on evolutionary models"/>
</dbReference>
<dbReference type="PhylomeDB" id="Q15363"/>
<dbReference type="TreeFam" id="TF313000"/>
<dbReference type="PathwayCommons" id="Q15363"/>
<dbReference type="Reactome" id="R-HSA-1912420">
    <property type="pathway name" value="Pre-NOTCH Processing in Golgi"/>
</dbReference>
<dbReference type="Reactome" id="R-HSA-204005">
    <property type="pathway name" value="COPII-mediated vesicle transport"/>
</dbReference>
<dbReference type="Reactome" id="R-HSA-5694530">
    <property type="pathway name" value="Cargo concentration in the ER"/>
</dbReference>
<dbReference type="Reactome" id="R-HSA-6807878">
    <property type="pathway name" value="COPI-mediated anterograde transport"/>
</dbReference>
<dbReference type="Reactome" id="R-HSA-6811434">
    <property type="pathway name" value="COPI-dependent Golgi-to-ER retrograde traffic"/>
</dbReference>
<dbReference type="SignaLink" id="Q15363"/>
<dbReference type="BioGRID-ORCS" id="10959">
    <property type="hits" value="448 hits in 1157 CRISPR screens"/>
</dbReference>
<dbReference type="ChiTaRS" id="TMED2">
    <property type="organism name" value="human"/>
</dbReference>
<dbReference type="GeneWiki" id="TMED2"/>
<dbReference type="GenomeRNAi" id="10959"/>
<dbReference type="Pharos" id="Q15363">
    <property type="development level" value="Tbio"/>
</dbReference>
<dbReference type="PRO" id="PR:Q15363"/>
<dbReference type="Proteomes" id="UP000005640">
    <property type="component" value="Chromosome 12"/>
</dbReference>
<dbReference type="RNAct" id="Q15363">
    <property type="molecule type" value="protein"/>
</dbReference>
<dbReference type="Bgee" id="ENSG00000086598">
    <property type="expression patterns" value="Expressed in parotid gland and 217 other cell types or tissues"/>
</dbReference>
<dbReference type="ExpressionAtlas" id="Q15363">
    <property type="expression patterns" value="baseline and differential"/>
</dbReference>
<dbReference type="GO" id="GO:0030137">
    <property type="term" value="C:COPI-coated vesicle"/>
    <property type="evidence" value="ECO:0000250"/>
    <property type="project" value="UniProtKB"/>
</dbReference>
<dbReference type="GO" id="GO:0030663">
    <property type="term" value="C:COPI-coated vesicle membrane"/>
    <property type="evidence" value="ECO:0007669"/>
    <property type="project" value="UniProtKB-SubCell"/>
</dbReference>
<dbReference type="GO" id="GO:0030134">
    <property type="term" value="C:COPII-coated ER to Golgi transport vesicle"/>
    <property type="evidence" value="ECO:0000318"/>
    <property type="project" value="GO_Central"/>
</dbReference>
<dbReference type="GO" id="GO:0005783">
    <property type="term" value="C:endoplasmic reticulum"/>
    <property type="evidence" value="ECO:0000314"/>
    <property type="project" value="UniProtKB"/>
</dbReference>
<dbReference type="GO" id="GO:0005789">
    <property type="term" value="C:endoplasmic reticulum membrane"/>
    <property type="evidence" value="ECO:0000304"/>
    <property type="project" value="Reactome"/>
</dbReference>
<dbReference type="GO" id="GO:0005793">
    <property type="term" value="C:endoplasmic reticulum-Golgi intermediate compartment"/>
    <property type="evidence" value="ECO:0000314"/>
    <property type="project" value="UniProtKB"/>
</dbReference>
<dbReference type="GO" id="GO:0033116">
    <property type="term" value="C:endoplasmic reticulum-Golgi intermediate compartment membrane"/>
    <property type="evidence" value="ECO:0000304"/>
    <property type="project" value="Reactome"/>
</dbReference>
<dbReference type="GO" id="GO:0012507">
    <property type="term" value="C:ER to Golgi transport vesicle membrane"/>
    <property type="evidence" value="ECO:0000304"/>
    <property type="project" value="Reactome"/>
</dbReference>
<dbReference type="GO" id="GO:0005794">
    <property type="term" value="C:Golgi apparatus"/>
    <property type="evidence" value="ECO:0000314"/>
    <property type="project" value="UniProtKB"/>
</dbReference>
<dbReference type="GO" id="GO:0032580">
    <property type="term" value="C:Golgi cisterna membrane"/>
    <property type="evidence" value="ECO:0007669"/>
    <property type="project" value="UniProtKB-SubCell"/>
</dbReference>
<dbReference type="GO" id="GO:0000139">
    <property type="term" value="C:Golgi membrane"/>
    <property type="evidence" value="ECO:0000304"/>
    <property type="project" value="Reactome"/>
</dbReference>
<dbReference type="GO" id="GO:0043231">
    <property type="term" value="C:intracellular membrane-bounded organelle"/>
    <property type="evidence" value="ECO:0000314"/>
    <property type="project" value="HPA"/>
</dbReference>
<dbReference type="GO" id="GO:0016020">
    <property type="term" value="C:membrane"/>
    <property type="evidence" value="ECO:0000250"/>
    <property type="project" value="HGNC-UCL"/>
</dbReference>
<dbReference type="GO" id="GO:0030133">
    <property type="term" value="C:transport vesicle"/>
    <property type="evidence" value="ECO:0000304"/>
    <property type="project" value="Reactome"/>
</dbReference>
<dbReference type="GO" id="GO:0042589">
    <property type="term" value="C:zymogen granule membrane"/>
    <property type="evidence" value="ECO:0000250"/>
    <property type="project" value="HGNC-UCL"/>
</dbReference>
<dbReference type="GO" id="GO:0005109">
    <property type="term" value="F:frizzled binding"/>
    <property type="evidence" value="ECO:0007669"/>
    <property type="project" value="Ensembl"/>
</dbReference>
<dbReference type="GO" id="GO:0005119">
    <property type="term" value="F:smoothened binding"/>
    <property type="evidence" value="ECO:0007669"/>
    <property type="project" value="Ensembl"/>
</dbReference>
<dbReference type="GO" id="GO:1905069">
    <property type="term" value="P:allantois development"/>
    <property type="evidence" value="ECO:0007669"/>
    <property type="project" value="Ensembl"/>
</dbReference>
<dbReference type="GO" id="GO:0060670">
    <property type="term" value="P:branching involved in labyrinthine layer morphogenesis"/>
    <property type="evidence" value="ECO:0007669"/>
    <property type="project" value="Ensembl"/>
</dbReference>
<dbReference type="GO" id="GO:0060717">
    <property type="term" value="P:chorion development"/>
    <property type="evidence" value="ECO:0007669"/>
    <property type="project" value="Ensembl"/>
</dbReference>
<dbReference type="GO" id="GO:0048205">
    <property type="term" value="P:COPI coating of Golgi vesicle"/>
    <property type="evidence" value="ECO:0000304"/>
    <property type="project" value="UniProtKB"/>
</dbReference>
<dbReference type="GO" id="GO:0048208">
    <property type="term" value="P:COPII vesicle coating"/>
    <property type="evidence" value="ECO:0000304"/>
    <property type="project" value="UniProtKB"/>
</dbReference>
<dbReference type="GO" id="GO:0090158">
    <property type="term" value="P:endoplasmic reticulum membrane organization"/>
    <property type="evidence" value="ECO:0007669"/>
    <property type="project" value="Ensembl"/>
</dbReference>
<dbReference type="GO" id="GO:0006888">
    <property type="term" value="P:endoplasmic reticulum to Golgi vesicle-mediated transport"/>
    <property type="evidence" value="ECO:0000318"/>
    <property type="project" value="GO_Central"/>
</dbReference>
<dbReference type="GO" id="GO:0007030">
    <property type="term" value="P:Golgi organization"/>
    <property type="evidence" value="ECO:0000315"/>
    <property type="project" value="UniProtKB"/>
</dbReference>
<dbReference type="GO" id="GO:0001947">
    <property type="term" value="P:heart looping"/>
    <property type="evidence" value="ECO:0007669"/>
    <property type="project" value="Ensembl"/>
</dbReference>
<dbReference type="GO" id="GO:0006954">
    <property type="term" value="P:inflammatory response"/>
    <property type="evidence" value="ECO:0007669"/>
    <property type="project" value="Ensembl"/>
</dbReference>
<dbReference type="GO" id="GO:0006886">
    <property type="term" value="P:intracellular protein transport"/>
    <property type="evidence" value="ECO:0000314"/>
    <property type="project" value="UniProtKB"/>
</dbReference>
<dbReference type="GO" id="GO:0060716">
    <property type="term" value="P:labyrinthine layer blood vessel development"/>
    <property type="evidence" value="ECO:0007669"/>
    <property type="project" value="Ensembl"/>
</dbReference>
<dbReference type="GO" id="GO:0072595">
    <property type="term" value="P:maintenance of protein localization in organelle"/>
    <property type="evidence" value="ECO:0007669"/>
    <property type="project" value="Ensembl"/>
</dbReference>
<dbReference type="GO" id="GO:0001893">
    <property type="term" value="P:maternal placenta development"/>
    <property type="evidence" value="ECO:0007669"/>
    <property type="project" value="Ensembl"/>
</dbReference>
<dbReference type="GO" id="GO:0035264">
    <property type="term" value="P:multicellular organism growth"/>
    <property type="evidence" value="ECO:0007669"/>
    <property type="project" value="Ensembl"/>
</dbReference>
<dbReference type="GO" id="GO:0034260">
    <property type="term" value="P:negative regulation of GTPase activity"/>
    <property type="evidence" value="ECO:0000314"/>
    <property type="project" value="UniProtKB"/>
</dbReference>
<dbReference type="GO" id="GO:1903077">
    <property type="term" value="P:negative regulation of protein localization to plasma membrane"/>
    <property type="evidence" value="ECO:0007669"/>
    <property type="project" value="Ensembl"/>
</dbReference>
<dbReference type="GO" id="GO:0045879">
    <property type="term" value="P:negative regulation of smoothened signaling pathway"/>
    <property type="evidence" value="ECO:0007669"/>
    <property type="project" value="Ensembl"/>
</dbReference>
<dbReference type="GO" id="GO:0001843">
    <property type="term" value="P:neural tube closure"/>
    <property type="evidence" value="ECO:0007669"/>
    <property type="project" value="Ensembl"/>
</dbReference>
<dbReference type="GO" id="GO:0036499">
    <property type="term" value="P:PERK-mediated unfolded protein response"/>
    <property type="evidence" value="ECO:0007669"/>
    <property type="project" value="Ensembl"/>
</dbReference>
<dbReference type="GO" id="GO:0010628">
    <property type="term" value="P:positive regulation of gene expression"/>
    <property type="evidence" value="ECO:0007669"/>
    <property type="project" value="Ensembl"/>
</dbReference>
<dbReference type="GO" id="GO:0036342">
    <property type="term" value="P:post-anal tail morphogenesis"/>
    <property type="evidence" value="ECO:0007669"/>
    <property type="project" value="Ensembl"/>
</dbReference>
<dbReference type="GO" id="GO:0072659">
    <property type="term" value="P:protein localization to plasma membrane"/>
    <property type="evidence" value="ECO:0000314"/>
    <property type="project" value="UniProtKB"/>
</dbReference>
<dbReference type="GO" id="GO:0009306">
    <property type="term" value="P:protein secretion"/>
    <property type="evidence" value="ECO:0007669"/>
    <property type="project" value="Ensembl"/>
</dbReference>
<dbReference type="GO" id="GO:2000638">
    <property type="term" value="P:regulation of SREBP signaling pathway"/>
    <property type="evidence" value="ECO:0007669"/>
    <property type="project" value="Ensembl"/>
</dbReference>
<dbReference type="GO" id="GO:0032525">
    <property type="term" value="P:somite rostral/caudal axis specification"/>
    <property type="evidence" value="ECO:0007669"/>
    <property type="project" value="Ensembl"/>
</dbReference>
<dbReference type="GO" id="GO:0035459">
    <property type="term" value="P:vesicle cargo loading"/>
    <property type="evidence" value="ECO:0000304"/>
    <property type="project" value="UniProtKB"/>
</dbReference>
<dbReference type="InterPro" id="IPR015720">
    <property type="entry name" value="Emp24-like"/>
</dbReference>
<dbReference type="InterPro" id="IPR009038">
    <property type="entry name" value="GOLD_dom"/>
</dbReference>
<dbReference type="InterPro" id="IPR036598">
    <property type="entry name" value="GOLD_dom_sf"/>
</dbReference>
<dbReference type="PANTHER" id="PTHR22811">
    <property type="entry name" value="TRANSMEMBRANE EMP24 DOMAIN-CONTAINING PROTEIN"/>
    <property type="match status" value="1"/>
</dbReference>
<dbReference type="Pfam" id="PF01105">
    <property type="entry name" value="EMP24_GP25L"/>
    <property type="match status" value="1"/>
</dbReference>
<dbReference type="SMART" id="SM01190">
    <property type="entry name" value="EMP24_GP25L"/>
    <property type="match status" value="1"/>
</dbReference>
<dbReference type="SUPFAM" id="SSF101576">
    <property type="entry name" value="Supernatant protein factor (SPF), C-terminal domain"/>
    <property type="match status" value="1"/>
</dbReference>
<dbReference type="PROSITE" id="PS50866">
    <property type="entry name" value="GOLD"/>
    <property type="match status" value="1"/>
</dbReference>
<comment type="function">
    <text evidence="5 10 12 13 14">Involved in vesicular protein trafficking. Mainly functions in the early secretory pathway but also in post-Golgi membranes. Thought to act as cargo receptor at the lumenal side for incorporation of secretory cargo molecules into transport vesicles and to be involved in vesicle coat formation at the cytoplasmic side. In COPII vesicle-mediated anterograde transport involved in the transport of GPI-anchored proteins and proposed to act together with TMED10 as their cargo receptor; the function specifically implies SEC24C and SEC24D of the COPII vesicle coat and lipid raft-like microdomains of the ER. Recognizes GPI anchors structural remodeled in the ER by PGAP1 and MPPE1. In COPI vesicle-mediated retrograde transport inhibits the GTPase-activating activity of ARFGAP1 towards ARF1 thus preventing immature uncoating and allowing cargo selection to take place. Involved in trafficking of G protein-coupled receptors (GPCRs). Regulates F2RL1, OPRM1 and P2RY4 exocytic trafficking from the Golgi to the plasma membrane thus contributing to receptor resensitization. Facilitates CASR maturation and stabilization in the early secretory pathway and increases CASR plasma membrane targeting. Proposed to be involved in organization of intracellular membranes such as the maintenance of the Golgi apparatus. May also play a role in the biosynthesis of secreted cargo such as eventual processing.</text>
</comment>
<comment type="subunit">
    <text evidence="1 4 7 8 9 10 11 12 13 14 15">Monomer and homodimer in the endoplasmic reticulum, endoplasmic reticulum-Golgi intermediate compartment and Golgi. Probably oligomerizes with other members of the EMP24/GP25L family such as TMED7, TMED9 and TMED10. Interacts (via GOLD domain) with TMED10 (via GOLD domain). Associates with the COPI vesicle coat (coatomer); TMED10:TMED2 heterotetramers are proposed to be involved in coatomer association. Interacts (via C-terminus) with COPG1; the interaction involves dimeric TMED2. Interacts with SEC23A; indicative for an association of TMED2 with the COPII vesicle coat. Interacts with ARF1 and ARFGAP1 (By similarity). Interacts with CD59, SEC24A, SEC24B, SEC24C, SEC24D and ATL1. Interacts with KDELR1; the interaction is decreased by KDEL ligand (By similarity). Interacts with F2RL1; the interaction occurs at the Golgi apparatus. Interacts with CASR (immaturely glycosylated form); the interaction occurs in the endoplasmic reticulum-Golgi intermediate compartment or cis-Golgi. Interacts with F2RL1; the interaction occurs at the Golgi apparatus. Interacts with GORASP1 and GORASP2 (By similarity). Found in a complex composed at least of SURF4, TMED2 and TMED10.</text>
</comment>
<comment type="interaction">
    <interactant intactId="EBI-998485">
        <id>Q15363</id>
    </interactant>
    <interactant intactId="EBI-4400127">
        <id>P41180</id>
        <label>CASR</label>
    </interactant>
    <organismsDiffer>false</organismsDiffer>
    <experiments>3</experiments>
</comment>
<comment type="interaction">
    <interactant intactId="EBI-998485">
        <id>Q15363</id>
    </interactant>
    <interactant intactId="EBI-297972">
        <id>P13987</id>
        <label>CD59</label>
    </interactant>
    <organismsDiffer>false</organismsDiffer>
    <experiments>4</experiments>
</comment>
<comment type="interaction">
    <interactant intactId="EBI-998485">
        <id>Q15363</id>
    </interactant>
    <interactant intactId="EBI-4303189">
        <id>P55085</id>
        <label>F2RL1</label>
    </interactant>
    <organismsDiffer>false</organismsDiffer>
    <experiments>6</experiments>
</comment>
<comment type="interaction">
    <interactant intactId="EBI-998485">
        <id>Q15363</id>
    </interactant>
    <interactant intactId="EBI-998422">
        <id>P49755</id>
        <label>TMED10</label>
    </interactant>
    <organismsDiffer>false</organismsDiffer>
    <experiments>11</experiments>
</comment>
<comment type="interaction">
    <interactant intactId="EBI-998485">
        <id>Q15363</id>
    </interactant>
    <interactant intactId="EBI-4405327">
        <id>O35587</id>
        <label>TMED10</label>
    </interactant>
    <organismsDiffer>true</organismsDiffer>
    <experiments>2</experiments>
</comment>
<comment type="subcellular location">
    <subcellularLocation>
        <location evidence="17">Cytoplasmic vesicle membrane</location>
        <topology evidence="2">Single-pass type I membrane protein</topology>
    </subcellularLocation>
    <subcellularLocation>
        <location evidence="16">Cytoplasmic vesicle</location>
        <location evidence="16">COPI-coated vesicle membrane</location>
        <topology evidence="2">Single-pass type I membrane protein</topology>
    </subcellularLocation>
    <subcellularLocation>
        <location evidence="6 7">Golgi apparatus</location>
        <location evidence="6 7">cis-Golgi network membrane</location>
        <topology evidence="2">Single-pass type I membrane protein</topology>
    </subcellularLocation>
    <subcellularLocation>
        <location evidence="6 7">Golgi apparatus</location>
        <location evidence="6 7">Golgi stack membrane</location>
        <topology evidence="2">Single-pass type I membrane protein</topology>
    </subcellularLocation>
    <subcellularLocation>
        <location evidence="6 7">Endoplasmic reticulum membrane</location>
        <topology evidence="2">Single-pass type I membrane protein</topology>
    </subcellularLocation>
    <subcellularLocation>
        <location evidence="7">Endoplasmic reticulum-Golgi intermediate compartment membrane</location>
        <topology evidence="2">Single-pass type I membrane protein</topology>
    </subcellularLocation>
    <text evidence="7">Cycles between compartments of the early secretatory pathway.</text>
</comment>
<comment type="miscellaneous">
    <text>Ectopic expression of TMED2 alone does not result in its proper cis-Golgi network localization. Coexpression of TMED10 is necessary, and coexpression of TMED3 and/or TMED9 is facilitating localization. Down-regulation of TMED10 expression reduces TMED2 protein level.</text>
</comment>
<comment type="similarity">
    <text evidence="17">Belongs to the EMP24/GP25L family.</text>
</comment>
<name>TMED2_HUMAN</name>
<accession>Q15363</accession>
<feature type="signal peptide" evidence="2">
    <location>
        <begin position="1"/>
        <end position="20"/>
    </location>
</feature>
<feature type="chain" id="PRO_0000010381" description="Transmembrane emp24 domain-containing protein 2">
    <location>
        <begin position="21"/>
        <end position="201"/>
    </location>
</feature>
<feature type="topological domain" description="Lumenal" evidence="2">
    <location>
        <begin position="21"/>
        <end position="168"/>
    </location>
</feature>
<feature type="transmembrane region" description="Helical" evidence="2">
    <location>
        <begin position="169"/>
        <end position="189"/>
    </location>
</feature>
<feature type="topological domain" description="Cytoplasmic" evidence="2">
    <location>
        <begin position="190"/>
        <end position="201"/>
    </location>
</feature>
<feature type="domain" description="GOLD" evidence="3">
    <location>
        <begin position="30"/>
        <end position="112"/>
    </location>
</feature>
<feature type="region of interest" description="Interaction with F2RL1" evidence="10">
    <location>
        <begin position="1"/>
        <end position="181"/>
    </location>
</feature>
<feature type="region of interest" description="Required for TMED10 and TMED2 cis-Golgi network localization">
    <location>
        <begin position="118"/>
        <end position="157"/>
    </location>
</feature>
<feature type="coiled-coil region" evidence="2">
    <location>
        <begin position="117"/>
        <end position="167"/>
    </location>
</feature>
<feature type="short sequence motif" description="COPI vesicle coat-binding" evidence="2">
    <location>
        <begin position="194"/>
        <end position="201"/>
    </location>
</feature>
<feature type="short sequence motif" description="COPII vesicle coat-binding" evidence="2">
    <location>
        <begin position="194"/>
        <end position="195"/>
    </location>
</feature>
<feature type="mutagenesis site" description="Disrupts association with coatomer; when associated with S-198-199-S." evidence="5 12">
    <original>FF</original>
    <variation>AA</variation>
    <location>
        <begin position="194"/>
        <end position="195"/>
    </location>
</feature>
<feature type="mutagenesis site" description="Reduced surface and total expression of CASR." evidence="5 12">
    <original>FF</original>
    <variation>AA</variation>
    <location>
        <begin position="194"/>
        <end position="195"/>
    </location>
</feature>
<feature type="mutagenesis site" description="Disrupts association with coatomer; when associated with A-194-195-A." evidence="5">
    <original>RR</original>
    <variation>SS</variation>
    <location>
        <begin position="198"/>
        <end position="199"/>
    </location>
</feature>
<feature type="mutagenesis site" description="No inhibition of coatomer-dependent GTP hydrolysis." evidence="5">
    <original>RR</original>
    <variation>SS</variation>
    <location>
        <begin position="198"/>
        <end position="199"/>
    </location>
</feature>
<feature type="strand" evidence="18">
    <location>
        <begin position="22"/>
        <end position="25"/>
    </location>
</feature>
<feature type="strand" evidence="18">
    <location>
        <begin position="29"/>
        <end position="37"/>
    </location>
</feature>
<feature type="strand" evidence="18">
    <location>
        <begin position="42"/>
        <end position="49"/>
    </location>
</feature>
<feature type="strand" evidence="18">
    <location>
        <begin position="51"/>
        <end position="53"/>
    </location>
</feature>
<feature type="strand" evidence="18">
    <location>
        <begin position="57"/>
        <end position="62"/>
    </location>
</feature>
<feature type="strand" evidence="18">
    <location>
        <begin position="68"/>
        <end position="83"/>
    </location>
</feature>
<feature type="strand" evidence="18">
    <location>
        <begin position="85"/>
        <end position="96"/>
    </location>
</feature>
<feature type="strand" evidence="18">
    <location>
        <begin position="104"/>
        <end position="112"/>
    </location>
</feature>
<proteinExistence type="evidence at protein level"/>
<protein>
    <recommendedName>
        <fullName>Transmembrane emp24 domain-containing protein 2</fullName>
    </recommendedName>
    <alternativeName>
        <fullName>Membrane protein p24A</fullName>
    </alternativeName>
    <alternativeName>
        <fullName>p24</fullName>
    </alternativeName>
    <alternativeName>
        <fullName>p24 family protein beta-1</fullName>
        <shortName>p24beta1</shortName>
    </alternativeName>
</protein>
<keyword id="KW-0002">3D-structure</keyword>
<keyword id="KW-0175">Coiled coil</keyword>
<keyword id="KW-0968">Cytoplasmic vesicle</keyword>
<keyword id="KW-0256">Endoplasmic reticulum</keyword>
<keyword id="KW-0931">ER-Golgi transport</keyword>
<keyword id="KW-0333">Golgi apparatus</keyword>
<keyword id="KW-0472">Membrane</keyword>
<keyword id="KW-0653">Protein transport</keyword>
<keyword id="KW-1267">Proteomics identification</keyword>
<keyword id="KW-1185">Reference proteome</keyword>
<keyword id="KW-0732">Signal</keyword>
<keyword id="KW-0812">Transmembrane</keyword>
<keyword id="KW-1133">Transmembrane helix</keyword>
<keyword id="KW-0813">Transport</keyword>
<reference key="1">
    <citation type="journal article" date="1996" name="J. Biol. Chem.">
        <title>Tmp21 and p24A, two type I proteins enriched in pancreatic microsomal membranes, are members of a protein family involved in vesicular trafficking.</title>
        <authorList>
            <person name="Blum R."/>
            <person name="Feick P."/>
            <person name="Puype M."/>
            <person name="Vandekerckhove J."/>
            <person name="Klengel R."/>
            <person name="Nastainczyk W."/>
            <person name="Schulz I."/>
        </authorList>
    </citation>
    <scope>NUCLEOTIDE SEQUENCE [MRNA]</scope>
    <source>
        <tissue>Brain</tissue>
    </source>
</reference>
<reference key="2">
    <citation type="journal article" date="2004" name="Genome Res.">
        <title>The status, quality, and expansion of the NIH full-length cDNA project: the Mammalian Gene Collection (MGC).</title>
        <authorList>
            <consortium name="The MGC Project Team"/>
        </authorList>
    </citation>
    <scope>NUCLEOTIDE SEQUENCE [LARGE SCALE MRNA]</scope>
    <source>
        <tissue>Muscle</tissue>
    </source>
</reference>
<reference key="3">
    <citation type="journal article" date="1998" name="J. Cell Biol.">
        <title>gp25L/emp24/p24 protein family members of the cis-Golgi network bind both COP I and II coatomer.</title>
        <authorList>
            <person name="Dominguez M."/>
            <person name="Dejgaard K."/>
            <person name="Fullekrug J."/>
            <person name="Dahan S."/>
            <person name="Fazel A."/>
            <person name="Paccaud J.P."/>
            <person name="Thomas D.Y."/>
            <person name="Bergeron J.J."/>
            <person name="Nilsson T."/>
        </authorList>
    </citation>
    <scope>SUBCELLULAR LOCATION</scope>
    <scope>ASSOCIATION WITH COPI AND COPII VESICLE COAT</scope>
</reference>
<reference key="4">
    <citation type="journal article" date="1999" name="Mol. Biol. Cell">
        <title>Localization and recycling of gp27 (hp24gamma3): complex formation with other p24 family members.</title>
        <authorList>
            <person name="Fullekrug J."/>
            <person name="Suganuma T."/>
            <person name="Tang B.L."/>
            <person name="Hong W."/>
            <person name="Storrie B."/>
            <person name="Nilsson T."/>
        </authorList>
    </citation>
    <scope>SUBUNIT</scope>
</reference>
<reference key="5">
    <citation type="journal article" date="2000" name="Cell">
        <title>Decoding of sorting signals by coatomer through a GTPase switch in the COPI coat complex.</title>
        <authorList>
            <person name="Goldberg J."/>
        </authorList>
    </citation>
    <scope>FUNCTION</scope>
    <scope>MUTAGENESIS OF 194-PHE-PHE-195 AND 198-ARG-ARG-199</scope>
</reference>
<reference key="6">
    <citation type="journal article" date="2000" name="J. Cell Sci.">
        <title>Coupled transport of p24 family members.</title>
        <authorList>
            <person name="Emery G."/>
            <person name="Rojo M."/>
            <person name="Gruenberg J."/>
        </authorList>
    </citation>
    <scope>SUBCELLULAR LOCATION</scope>
</reference>
<reference key="7">
    <citation type="journal article" date="2002" name="J. Biol. Chem.">
        <title>Oligomeric state and stoichiometry of p24 proteins in the early secretory pathway.</title>
        <authorList>
            <person name="Jenne N."/>
            <person name="Frey K."/>
            <person name="Brugger B."/>
            <person name="Wieland F.T."/>
        </authorList>
    </citation>
    <scope>SUBCELLULAR LOCATION</scope>
    <scope>SUBUNIT</scope>
</reference>
<reference key="8">
    <citation type="journal article" date="2006" name="Mol. Cell. Biol.">
        <title>Coatomer, the coat protein of COPI transport vesicles, discriminates endoplasmic reticulum residents from p24 proteins.</title>
        <authorList>
            <person name="Bethune J."/>
            <person name="Kol M."/>
            <person name="Hoffmann J."/>
            <person name="Reckmann I."/>
            <person name="Brugger B."/>
            <person name="Wieland F."/>
        </authorList>
    </citation>
    <scope>INTERACTION WITH COPG1</scope>
</reference>
<reference key="9">
    <citation type="journal article" date="2007" name="J. Biol. Chem.">
        <title>p24A, a type I transmembrane protein, controls ARF1-dependent resensitization of protease-activated receptor-2 by influence on receptor trafficking.</title>
        <authorList>
            <person name="Luo W."/>
            <person name="Wang Y."/>
            <person name="Reiser G."/>
        </authorList>
    </citation>
    <scope>FUNCTION</scope>
    <scope>INTERACTION WITH F2RL1</scope>
</reference>
<reference key="10">
    <citation type="journal article" date="2007" name="Mol. Cell. Neurosci.">
        <title>Mutations in the SPG3A gene encoding the GTPase atlastin interfere with vesicle trafficking in the ER/Golgi interface and Golgi morphogenesis.</title>
        <authorList>
            <person name="Namekawa M."/>
            <person name="Muriel M.-P."/>
            <person name="Janer A."/>
            <person name="Latouche M."/>
            <person name="Dauphin A."/>
            <person name="Debeir T."/>
            <person name="Martin E."/>
            <person name="Duyckaerts C."/>
            <person name="Prigent A."/>
            <person name="Depienne C."/>
            <person name="Sittler A."/>
            <person name="Brice A."/>
            <person name="Ruberg M."/>
        </authorList>
    </citation>
    <scope>INTERACTION WITH ATL1</scope>
</reference>
<reference key="11">
    <citation type="journal article" date="2008" name="Mol. Biol. Cell">
        <title>The cargo receptors Surf4, endoplasmic reticulum-Golgi intermediate compartment (ERGIC)-53, and p25 are required to maintain the architecture of ERGIC and Golgi.</title>
        <authorList>
            <person name="Mitrovic S."/>
            <person name="Ben-Tekaya H."/>
            <person name="Koegler E."/>
            <person name="Gruenberg J."/>
            <person name="Hauri H.-P."/>
        </authorList>
    </citation>
    <scope>IDENTIFICATION IN A COMPLEX WITH SURF4 AND TMED10</scope>
</reference>
<reference key="12">
    <citation type="journal article" date="2010" name="Biochem. Biophys. Res. Commun.">
        <title>The cargo receptor p24A facilitates calcium sensing receptor maturation and stabilization in the early secretory pathway.</title>
        <authorList>
            <person name="Stepanchick A."/>
            <person name="Breitwieser G.E."/>
        </authorList>
    </citation>
    <scope>FUNCTION</scope>
    <scope>INTERACTION WITH CASR</scope>
    <scope>MUTAGENESIS OF 194-PHE-PHE-195</scope>
</reference>
<reference key="13">
    <citation type="journal article" date="2010" name="J. Cell Sci.">
        <title>Selective export of human GPI-anchored proteins from the endoplasmic reticulum.</title>
        <authorList>
            <person name="Bonnon C."/>
            <person name="Wendeler M.W."/>
            <person name="Paccaud J.P."/>
            <person name="Hauri H.P."/>
        </authorList>
    </citation>
    <scope>FUNCTION</scope>
    <scope>INTERACTION WITH CD59; SEC24A; SEC24B; SEC24C AND SEC24D</scope>
</reference>
<reference key="14">
    <citation type="journal article" date="2011" name="BMC Syst. Biol.">
        <title>Initial characterization of the human central proteome.</title>
        <authorList>
            <person name="Burkard T.R."/>
            <person name="Planyavsky M."/>
            <person name="Kaupe I."/>
            <person name="Breitwieser F.P."/>
            <person name="Buerckstuemmer T."/>
            <person name="Bennett K.L."/>
            <person name="Superti-Furga G."/>
            <person name="Colinge J."/>
        </authorList>
    </citation>
    <scope>IDENTIFICATION BY MASS SPECTROMETRY [LARGE SCALE ANALYSIS]</scope>
</reference>
<reference key="15">
    <citation type="journal article" date="2011" name="J. Neurochem.">
        <title>Proteinase-activated receptors, nucleotide P2Y receptors, and mu-opioid receptor-1B are under the control of the type I transmembrane proteins p23 and p24A in post-Golgi trafficking.</title>
        <authorList>
            <person name="Luo W."/>
            <person name="Wang Y."/>
            <person name="Reiser G."/>
        </authorList>
    </citation>
    <scope>FUNCTION</scope>
    <scope>INTERACTION WITH F2R; P2RY4; P2RY11 AND OPRM1</scope>
</reference>
<reference key="16">
    <citation type="journal article" date="2014" name="J. Proteomics">
        <title>An enzyme assisted RP-RPLC approach for in-depth analysis of human liver phosphoproteome.</title>
        <authorList>
            <person name="Bian Y."/>
            <person name="Song C."/>
            <person name="Cheng K."/>
            <person name="Dong M."/>
            <person name="Wang F."/>
            <person name="Huang J."/>
            <person name="Sun D."/>
            <person name="Wang L."/>
            <person name="Ye M."/>
            <person name="Zou H."/>
        </authorList>
    </citation>
    <scope>IDENTIFICATION BY MASS SPECTROMETRY [LARGE SCALE ANALYSIS]</scope>
    <source>
        <tissue>Liver</tissue>
    </source>
</reference>
<reference key="17">
    <citation type="journal article" date="2015" name="Proteomics">
        <title>N-terminome analysis of the human mitochondrial proteome.</title>
        <authorList>
            <person name="Vaca Jacome A.S."/>
            <person name="Rabilloud T."/>
            <person name="Schaeffer-Reiss C."/>
            <person name="Rompais M."/>
            <person name="Ayoub D."/>
            <person name="Lane L."/>
            <person name="Bairoch A."/>
            <person name="Van Dorsselaer A."/>
            <person name="Carapito C."/>
        </authorList>
    </citation>
    <scope>IDENTIFICATION BY MASS SPECTROMETRY [LARGE SCALE ANALYSIS]</scope>
</reference>
<reference key="18">
    <citation type="journal article" date="2016" name="J. Mol. Biol.">
        <title>3D structure and interaction of p24beta and p24delta golgi dynamics domains: implication for p24 complex formation and cargo transport.</title>
        <authorList>
            <person name="Nagae M."/>
            <person name="Hirata T."/>
            <person name="Morita-Matsumoto K."/>
            <person name="Theiler R."/>
            <person name="Fujita M."/>
            <person name="Kinoshita T."/>
            <person name="Yamaguchi Y."/>
        </authorList>
    </citation>
    <scope>X-RAY CRYSTALLOGRAPHY (1.50 ANGSTROMS) OF 19-114</scope>
    <scope>INTERACTION WITH TMED10</scope>
</reference>
<sequence length="201" mass="22761">MVTLAELLVLLAALLATVSGYFVSIDAHAEECFFERVTSGTKMGLIFEVAEGGFLDIDVEITGPDNKGIYKGDRESSGKYTFAAHMDGTYKFCFSNRMSTMTPKIVMFTIDIGEAPKGQDMETEAHQNKLEEMINELAVAMTAVKHEQEYMEVRERIHRAINDNTNSRVVLWSFFEALVLVAMTLGQIYYLKRFFEVRRVV</sequence>
<organism>
    <name type="scientific">Homo sapiens</name>
    <name type="common">Human</name>
    <dbReference type="NCBI Taxonomy" id="9606"/>
    <lineage>
        <taxon>Eukaryota</taxon>
        <taxon>Metazoa</taxon>
        <taxon>Chordata</taxon>
        <taxon>Craniata</taxon>
        <taxon>Vertebrata</taxon>
        <taxon>Euteleostomi</taxon>
        <taxon>Mammalia</taxon>
        <taxon>Eutheria</taxon>
        <taxon>Euarchontoglires</taxon>
        <taxon>Primates</taxon>
        <taxon>Haplorrhini</taxon>
        <taxon>Catarrhini</taxon>
        <taxon>Hominidae</taxon>
        <taxon>Homo</taxon>
    </lineage>
</organism>